<reference key="1">
    <citation type="journal article" date="2006" name="BMC Genomics">
        <title>Complete genome sequence of Shigella flexneri 5b and comparison with Shigella flexneri 2a.</title>
        <authorList>
            <person name="Nie H."/>
            <person name="Yang F."/>
            <person name="Zhang X."/>
            <person name="Yang J."/>
            <person name="Chen L."/>
            <person name="Wang J."/>
            <person name="Xiong Z."/>
            <person name="Peng J."/>
            <person name="Sun L."/>
            <person name="Dong J."/>
            <person name="Xue Y."/>
            <person name="Xu X."/>
            <person name="Chen S."/>
            <person name="Yao Z."/>
            <person name="Shen Y."/>
            <person name="Jin Q."/>
        </authorList>
    </citation>
    <scope>NUCLEOTIDE SEQUENCE [LARGE SCALE GENOMIC DNA]</scope>
    <source>
        <strain>8401</strain>
    </source>
</reference>
<feature type="chain" id="PRO_1000067321" description="3-keto-L-gulonate-6-phosphate decarboxylase UlaD">
    <location>
        <begin position="1"/>
        <end position="216"/>
    </location>
</feature>
<feature type="binding site" evidence="1">
    <location>
        <position position="11"/>
    </location>
    <ligand>
        <name>substrate</name>
    </ligand>
</feature>
<feature type="binding site" evidence="1">
    <location>
        <position position="33"/>
    </location>
    <ligand>
        <name>Mg(2+)</name>
        <dbReference type="ChEBI" id="CHEBI:18420"/>
    </ligand>
</feature>
<feature type="binding site" evidence="1">
    <location>
        <position position="62"/>
    </location>
    <ligand>
        <name>Mg(2+)</name>
        <dbReference type="ChEBI" id="CHEBI:18420"/>
    </ligand>
</feature>
<feature type="binding site" evidence="1">
    <location>
        <position position="192"/>
    </location>
    <ligand>
        <name>substrate</name>
    </ligand>
</feature>
<feature type="site" description="Transition state stabilizer" evidence="1">
    <location>
        <position position="64"/>
    </location>
</feature>
<feature type="site" description="Transition state stabilizer" evidence="1">
    <location>
        <position position="67"/>
    </location>
</feature>
<evidence type="ECO:0000255" key="1">
    <source>
        <dbReference type="HAMAP-Rule" id="MF_01267"/>
    </source>
</evidence>
<accession>Q0SX89</accession>
<proteinExistence type="inferred from homology"/>
<sequence>MSLPMLQVALDNQTMDSAYETTRLIAEEVDIIEVGTILCVGEGVRAVRDLKALYPHKIVLADAKIADAGKILSRMCFEANADWVTVICCADINTAKGALDVAKEFNGDVQIELTGYWTWEQAQQWRDAGIQQVVYHRSRDAQAAGVAWGEADITAIKRLSDMGFKVTVTGGLALEDLPLFKGIPIHVFIAGRSIRDAASPVEAARQFKRSIAELWG</sequence>
<keyword id="KW-0119">Carbohydrate metabolism</keyword>
<keyword id="KW-0210">Decarboxylase</keyword>
<keyword id="KW-0456">Lyase</keyword>
<keyword id="KW-0460">Magnesium</keyword>
<keyword id="KW-0479">Metal-binding</keyword>
<gene>
    <name evidence="1" type="primary">ulaD</name>
    <name type="ordered locus">SFV_4352</name>
</gene>
<protein>
    <recommendedName>
        <fullName evidence="1">3-keto-L-gulonate-6-phosphate decarboxylase UlaD</fullName>
        <ecNumber evidence="1">4.1.1.85</ecNumber>
    </recommendedName>
    <alternativeName>
        <fullName evidence="1">3-dehydro-L-gulonate-6-phosphate decarboxylase</fullName>
    </alternativeName>
    <alternativeName>
        <fullName evidence="1">KGPDC</fullName>
    </alternativeName>
    <alternativeName>
        <fullName evidence="1">L-ascorbate utilization protein D</fullName>
    </alternativeName>
</protein>
<dbReference type="EC" id="4.1.1.85" evidence="1"/>
<dbReference type="EMBL" id="CP000266">
    <property type="protein sequence ID" value="ABF06326.1"/>
    <property type="molecule type" value="Genomic_DNA"/>
</dbReference>
<dbReference type="RefSeq" id="WP_000056760.1">
    <property type="nucleotide sequence ID" value="NC_008258.1"/>
</dbReference>
<dbReference type="SMR" id="Q0SX89"/>
<dbReference type="GeneID" id="75202430"/>
<dbReference type="KEGG" id="sfv:SFV_4352"/>
<dbReference type="HOGENOM" id="CLU_081825_0_0_6"/>
<dbReference type="UniPathway" id="UPA00263">
    <property type="reaction ID" value="UER00378"/>
</dbReference>
<dbReference type="Proteomes" id="UP000000659">
    <property type="component" value="Chromosome"/>
</dbReference>
<dbReference type="GO" id="GO:0033982">
    <property type="term" value="F:3-dehydro-L-gulonate-6-phosphate decarboxylase activity"/>
    <property type="evidence" value="ECO:0007669"/>
    <property type="project" value="UniProtKB-EC"/>
</dbReference>
<dbReference type="GO" id="GO:0000287">
    <property type="term" value="F:magnesium ion binding"/>
    <property type="evidence" value="ECO:0007669"/>
    <property type="project" value="UniProtKB-UniRule"/>
</dbReference>
<dbReference type="GO" id="GO:0004590">
    <property type="term" value="F:orotidine-5'-phosphate decarboxylase activity"/>
    <property type="evidence" value="ECO:0007669"/>
    <property type="project" value="InterPro"/>
</dbReference>
<dbReference type="GO" id="GO:0006207">
    <property type="term" value="P:'de novo' pyrimidine nucleobase biosynthetic process"/>
    <property type="evidence" value="ECO:0007669"/>
    <property type="project" value="InterPro"/>
</dbReference>
<dbReference type="GO" id="GO:0019854">
    <property type="term" value="P:L-ascorbic acid catabolic process"/>
    <property type="evidence" value="ECO:0007669"/>
    <property type="project" value="UniProtKB-UniRule"/>
</dbReference>
<dbReference type="CDD" id="cd04726">
    <property type="entry name" value="KGPDC_HPS"/>
    <property type="match status" value="1"/>
</dbReference>
<dbReference type="FunFam" id="3.20.20.70:FF:000022">
    <property type="entry name" value="3-keto-L-gulonate-6-phosphate decarboxylase UlaD"/>
    <property type="match status" value="1"/>
</dbReference>
<dbReference type="Gene3D" id="3.20.20.70">
    <property type="entry name" value="Aldolase class I"/>
    <property type="match status" value="1"/>
</dbReference>
<dbReference type="HAMAP" id="MF_01267">
    <property type="entry name" value="UlaD"/>
    <property type="match status" value="1"/>
</dbReference>
<dbReference type="InterPro" id="IPR023942">
    <property type="entry name" value="3-keto-L-gulonate6Pdecase_UlaD"/>
</dbReference>
<dbReference type="InterPro" id="IPR013785">
    <property type="entry name" value="Aldolase_TIM"/>
</dbReference>
<dbReference type="InterPro" id="IPR041710">
    <property type="entry name" value="HPS/KGPDC"/>
</dbReference>
<dbReference type="InterPro" id="IPR001754">
    <property type="entry name" value="OMPdeCOase_dom"/>
</dbReference>
<dbReference type="InterPro" id="IPR011060">
    <property type="entry name" value="RibuloseP-bd_barrel"/>
</dbReference>
<dbReference type="NCBIfam" id="NF009832">
    <property type="entry name" value="PRK13306.1"/>
    <property type="match status" value="1"/>
</dbReference>
<dbReference type="PANTHER" id="PTHR35039">
    <property type="entry name" value="3-KETO-L-GULONATE-6-PHOSPHATE DECARBOXYLASE SGBH-RELATED"/>
    <property type="match status" value="1"/>
</dbReference>
<dbReference type="PANTHER" id="PTHR35039:SF3">
    <property type="entry name" value="3-KETO-L-GULONATE-6-PHOSPHATE DECARBOXYLASE SGBH-RELATED"/>
    <property type="match status" value="1"/>
</dbReference>
<dbReference type="Pfam" id="PF00215">
    <property type="entry name" value="OMPdecase"/>
    <property type="match status" value="1"/>
</dbReference>
<dbReference type="SMART" id="SM00934">
    <property type="entry name" value="OMPdecase"/>
    <property type="match status" value="1"/>
</dbReference>
<dbReference type="SUPFAM" id="SSF51366">
    <property type="entry name" value="Ribulose-phoshate binding barrel"/>
    <property type="match status" value="1"/>
</dbReference>
<comment type="function">
    <text evidence="1">Catalyzes the decarboxylation of 3-keto-L-gulonate-6-P into L-xylulose-5-P. Is involved in the anaerobic L-ascorbate utilization.</text>
</comment>
<comment type="catalytic activity">
    <reaction evidence="1">
        <text>3-dehydro-L-gulonate 6-phosphate + H(+) = L-xylulose 5-phosphate + CO2</text>
        <dbReference type="Rhea" id="RHEA:14353"/>
        <dbReference type="ChEBI" id="CHEBI:15378"/>
        <dbReference type="ChEBI" id="CHEBI:16526"/>
        <dbReference type="ChEBI" id="CHEBI:57829"/>
        <dbReference type="ChEBI" id="CHEBI:58774"/>
        <dbReference type="EC" id="4.1.1.85"/>
    </reaction>
</comment>
<comment type="cofactor">
    <cofactor evidence="1">
        <name>Mg(2+)</name>
        <dbReference type="ChEBI" id="CHEBI:18420"/>
    </cofactor>
    <text evidence="1">Binds 1 Mg(2+) ion per subunit.</text>
</comment>
<comment type="pathway">
    <text evidence="1">Cofactor degradation; L-ascorbate degradation; D-xylulose 5-phosphate from L-ascorbate: step 2/4.</text>
</comment>
<comment type="subunit">
    <text evidence="1">Homodimer.</text>
</comment>
<comment type="induction">
    <text evidence="1">Induced by L-ascorbate. Repressed by UlaR.</text>
</comment>
<comment type="similarity">
    <text evidence="1">Belongs to the HPS/KGPDC family. KGPDC subfamily.</text>
</comment>
<name>ULAD_SHIF8</name>
<organism>
    <name type="scientific">Shigella flexneri serotype 5b (strain 8401)</name>
    <dbReference type="NCBI Taxonomy" id="373384"/>
    <lineage>
        <taxon>Bacteria</taxon>
        <taxon>Pseudomonadati</taxon>
        <taxon>Pseudomonadota</taxon>
        <taxon>Gammaproteobacteria</taxon>
        <taxon>Enterobacterales</taxon>
        <taxon>Enterobacteriaceae</taxon>
        <taxon>Shigella</taxon>
    </lineage>
</organism>